<protein>
    <recommendedName>
        <fullName evidence="1">Small ribosomal subunit protein uS2</fullName>
    </recommendedName>
    <alternativeName>
        <fullName evidence="2">30S ribosomal protein S2</fullName>
    </alternativeName>
</protein>
<accession>C1CUD2</accession>
<dbReference type="EMBL" id="CP000921">
    <property type="protein sequence ID" value="ACO23712.1"/>
    <property type="molecule type" value="Genomic_DNA"/>
</dbReference>
<dbReference type="RefSeq" id="WP_000268466.1">
    <property type="nucleotide sequence ID" value="NC_012469.1"/>
</dbReference>
<dbReference type="SMR" id="C1CUD2"/>
<dbReference type="GeneID" id="45652565"/>
<dbReference type="KEGG" id="snt:SPT_2233"/>
<dbReference type="HOGENOM" id="CLU_040318_1_2_9"/>
<dbReference type="GO" id="GO:0022627">
    <property type="term" value="C:cytosolic small ribosomal subunit"/>
    <property type="evidence" value="ECO:0007669"/>
    <property type="project" value="TreeGrafter"/>
</dbReference>
<dbReference type="GO" id="GO:0003735">
    <property type="term" value="F:structural constituent of ribosome"/>
    <property type="evidence" value="ECO:0007669"/>
    <property type="project" value="InterPro"/>
</dbReference>
<dbReference type="GO" id="GO:0006412">
    <property type="term" value="P:translation"/>
    <property type="evidence" value="ECO:0007669"/>
    <property type="project" value="UniProtKB-UniRule"/>
</dbReference>
<dbReference type="CDD" id="cd01425">
    <property type="entry name" value="RPS2"/>
    <property type="match status" value="1"/>
</dbReference>
<dbReference type="FunFam" id="1.10.287.610:FF:000001">
    <property type="entry name" value="30S ribosomal protein S2"/>
    <property type="match status" value="1"/>
</dbReference>
<dbReference type="Gene3D" id="3.40.50.10490">
    <property type="entry name" value="Glucose-6-phosphate isomerase like protein, domain 1"/>
    <property type="match status" value="1"/>
</dbReference>
<dbReference type="Gene3D" id="1.10.287.610">
    <property type="entry name" value="Helix hairpin bin"/>
    <property type="match status" value="1"/>
</dbReference>
<dbReference type="HAMAP" id="MF_00291_B">
    <property type="entry name" value="Ribosomal_uS2_B"/>
    <property type="match status" value="1"/>
</dbReference>
<dbReference type="InterPro" id="IPR001865">
    <property type="entry name" value="Ribosomal_uS2"/>
</dbReference>
<dbReference type="InterPro" id="IPR005706">
    <property type="entry name" value="Ribosomal_uS2_bac/mit/plastid"/>
</dbReference>
<dbReference type="InterPro" id="IPR018130">
    <property type="entry name" value="Ribosomal_uS2_CS"/>
</dbReference>
<dbReference type="InterPro" id="IPR023591">
    <property type="entry name" value="Ribosomal_uS2_flav_dom_sf"/>
</dbReference>
<dbReference type="NCBIfam" id="TIGR01011">
    <property type="entry name" value="rpsB_bact"/>
    <property type="match status" value="1"/>
</dbReference>
<dbReference type="PANTHER" id="PTHR12534">
    <property type="entry name" value="30S RIBOSOMAL PROTEIN S2 PROKARYOTIC AND ORGANELLAR"/>
    <property type="match status" value="1"/>
</dbReference>
<dbReference type="PANTHER" id="PTHR12534:SF0">
    <property type="entry name" value="SMALL RIBOSOMAL SUBUNIT PROTEIN US2M"/>
    <property type="match status" value="1"/>
</dbReference>
<dbReference type="Pfam" id="PF00318">
    <property type="entry name" value="Ribosomal_S2"/>
    <property type="match status" value="1"/>
</dbReference>
<dbReference type="PRINTS" id="PR00395">
    <property type="entry name" value="RIBOSOMALS2"/>
</dbReference>
<dbReference type="SUPFAM" id="SSF52313">
    <property type="entry name" value="Ribosomal protein S2"/>
    <property type="match status" value="1"/>
</dbReference>
<dbReference type="PROSITE" id="PS00962">
    <property type="entry name" value="RIBOSOMAL_S2_1"/>
    <property type="match status" value="1"/>
</dbReference>
<proteinExistence type="inferred from homology"/>
<keyword id="KW-0687">Ribonucleoprotein</keyword>
<keyword id="KW-0689">Ribosomal protein</keyword>
<gene>
    <name evidence="1" type="primary">rpsB</name>
    <name type="ordered locus">SPT_2233</name>
</gene>
<organism>
    <name type="scientific">Streptococcus pneumoniae (strain Taiwan19F-14)</name>
    <dbReference type="NCBI Taxonomy" id="487213"/>
    <lineage>
        <taxon>Bacteria</taxon>
        <taxon>Bacillati</taxon>
        <taxon>Bacillota</taxon>
        <taxon>Bacilli</taxon>
        <taxon>Lactobacillales</taxon>
        <taxon>Streptococcaceae</taxon>
        <taxon>Streptococcus</taxon>
    </lineage>
</organism>
<evidence type="ECO:0000255" key="1">
    <source>
        <dbReference type="HAMAP-Rule" id="MF_00291"/>
    </source>
</evidence>
<evidence type="ECO:0000305" key="2"/>
<sequence>MAVISMKQLLEAGVHFGHQTRRWNPKMAKYIFTERNGIHVIDLQQTVKYADQAYDFMRDAAANDAVVLFVGTKKQAADAVAEEAVRSGQYFINHRWLGGTLTNWGTIQKRIARLKEIKRMEEDGTFEVLPKKEVALLNKQRARLEKFLGGIEDMPRIPDVMYVVDPHKEQIAVKEAKKLGIPVVAMVDTNTDPDDIDVIIPANDDAIRAVKLITAKLADAIIEGRQGEDAVAVEAEFAASETQADSIEEIVEVVEGDNA</sequence>
<name>RS2_STRZT</name>
<feature type="chain" id="PRO_1000194351" description="Small ribosomal subunit protein uS2">
    <location>
        <begin position="1"/>
        <end position="259"/>
    </location>
</feature>
<comment type="similarity">
    <text evidence="1">Belongs to the universal ribosomal protein uS2 family.</text>
</comment>
<reference key="1">
    <citation type="journal article" date="2010" name="Genome Biol.">
        <title>Structure and dynamics of the pan-genome of Streptococcus pneumoniae and closely related species.</title>
        <authorList>
            <person name="Donati C."/>
            <person name="Hiller N.L."/>
            <person name="Tettelin H."/>
            <person name="Muzzi A."/>
            <person name="Croucher N.J."/>
            <person name="Angiuoli S.V."/>
            <person name="Oggioni M."/>
            <person name="Dunning Hotopp J.C."/>
            <person name="Hu F.Z."/>
            <person name="Riley D.R."/>
            <person name="Covacci A."/>
            <person name="Mitchell T.J."/>
            <person name="Bentley S.D."/>
            <person name="Kilian M."/>
            <person name="Ehrlich G.D."/>
            <person name="Rappuoli R."/>
            <person name="Moxon E.R."/>
            <person name="Masignani V."/>
        </authorList>
    </citation>
    <scope>NUCLEOTIDE SEQUENCE [LARGE SCALE GENOMIC DNA]</scope>
    <source>
        <strain>Taiwan19F-14</strain>
    </source>
</reference>